<protein>
    <recommendedName>
        <fullName evidence="1 6">8-oxoguanine DNA glycosylase/AP lyase</fullName>
    </recommendedName>
    <domain>
        <recommendedName>
            <fullName evidence="1 5">8-oxoguanine DNA glycosylase</fullName>
            <shortName evidence="1">8-oxoG DNA glycosylase</shortName>
            <ecNumber evidence="1 2 3">3.2.2.-</ecNumber>
        </recommendedName>
    </domain>
    <domain>
        <recommendedName>
            <fullName evidence="1 6">DNA-(apurinic or apyrimidinic site) lyase</fullName>
            <shortName evidence="1 6">AP lyase</shortName>
            <ecNumber evidence="1 2 3">4.2.99.18</ecNumber>
        </recommendedName>
    </domain>
</protein>
<name>OGG1_METJA</name>
<feature type="chain" id="PRO_0000159562" description="8-oxoguanine DNA glycosylase/AP lyase">
    <location>
        <begin position="1"/>
        <end position="207"/>
    </location>
</feature>
<feature type="active site" evidence="1 7">
    <location>
        <position position="129"/>
    </location>
</feature>
<feature type="active site" evidence="1 7">
    <location>
        <position position="147"/>
    </location>
</feature>
<feature type="site" description="Important for guanine/8-oxoguanine distinction" evidence="1 3 4">
    <location>
        <position position="207"/>
    </location>
</feature>
<feature type="mutagenesis site" description="Loss of activity." evidence="2">
    <original>K</original>
    <variation>S</variation>
    <location>
        <position position="129"/>
    </location>
</feature>
<feature type="mutagenesis site" description="Unable to excise the damaged base. Slight decrease in lyase activity." evidence="3">
    <location>
        <begin position="205"/>
        <end position="207"/>
    </location>
</feature>
<feature type="helix" evidence="10">
    <location>
        <begin position="1"/>
        <end position="11"/>
    </location>
</feature>
<feature type="helix" evidence="10">
    <location>
        <begin position="15"/>
        <end position="27"/>
    </location>
</feature>
<feature type="helix" evidence="10">
    <location>
        <begin position="28"/>
        <end position="31"/>
    </location>
</feature>
<feature type="helix" evidence="10">
    <location>
        <begin position="34"/>
        <end position="47"/>
    </location>
</feature>
<feature type="helix" evidence="10">
    <location>
        <begin position="52"/>
        <end position="62"/>
    </location>
</feature>
<feature type="helix" evidence="10">
    <location>
        <begin position="65"/>
        <end position="68"/>
    </location>
</feature>
<feature type="helix" evidence="10">
    <location>
        <begin position="71"/>
        <end position="80"/>
    </location>
</feature>
<feature type="helix" evidence="10">
    <location>
        <begin position="86"/>
        <end position="96"/>
    </location>
</feature>
<feature type="helix" evidence="10">
    <location>
        <begin position="97"/>
        <end position="99"/>
    </location>
</feature>
<feature type="helix" evidence="10">
    <location>
        <begin position="102"/>
        <end position="108"/>
    </location>
</feature>
<feature type="strand" evidence="10">
    <location>
        <begin position="109"/>
        <end position="111"/>
    </location>
</feature>
<feature type="helix" evidence="10">
    <location>
        <begin position="112"/>
        <end position="122"/>
    </location>
</feature>
<feature type="helix" evidence="10">
    <location>
        <begin position="128"/>
        <end position="137"/>
    </location>
</feature>
<feature type="helix" evidence="10">
    <location>
        <begin position="148"/>
        <end position="156"/>
    </location>
</feature>
<feature type="strand" evidence="10">
    <location>
        <begin position="159"/>
        <end position="162"/>
    </location>
</feature>
<feature type="helix" evidence="10">
    <location>
        <begin position="169"/>
        <end position="185"/>
    </location>
</feature>
<feature type="helix" evidence="10">
    <location>
        <begin position="190"/>
        <end position="202"/>
    </location>
</feature>
<dbReference type="EC" id="3.2.2.-" evidence="1 2 3"/>
<dbReference type="EC" id="4.2.99.18" evidence="1 2 3"/>
<dbReference type="EMBL" id="L77117">
    <property type="protein sequence ID" value="AAB98720.1"/>
    <property type="molecule type" value="Genomic_DNA"/>
</dbReference>
<dbReference type="PIR" id="D64390">
    <property type="entry name" value="D64390"/>
</dbReference>
<dbReference type="PDB" id="3FHF">
    <property type="method" value="X-ray"/>
    <property type="resolution" value="2.00 A"/>
    <property type="chains" value="A=1-207"/>
</dbReference>
<dbReference type="PDB" id="3KNT">
    <property type="method" value="X-ray"/>
    <property type="resolution" value="2.70 A"/>
    <property type="chains" value="A/B/C/D=1-207"/>
</dbReference>
<dbReference type="PDBsum" id="3FHF"/>
<dbReference type="PDBsum" id="3KNT"/>
<dbReference type="SMR" id="Q58134"/>
<dbReference type="STRING" id="243232.MJ_0724"/>
<dbReference type="PaxDb" id="243232-MJ_0724"/>
<dbReference type="EnsemblBacteria" id="AAB98720">
    <property type="protein sequence ID" value="AAB98720"/>
    <property type="gene ID" value="MJ_0724"/>
</dbReference>
<dbReference type="KEGG" id="mja:MJ_0724"/>
<dbReference type="eggNOG" id="arCOG04357">
    <property type="taxonomic scope" value="Archaea"/>
</dbReference>
<dbReference type="HOGENOM" id="CLU_104937_0_0_2"/>
<dbReference type="InParanoid" id="Q58134"/>
<dbReference type="PhylomeDB" id="Q58134"/>
<dbReference type="BRENDA" id="3.2.2.B5">
    <property type="organism ID" value="3260"/>
</dbReference>
<dbReference type="BRENDA" id="4.2.99.18">
    <property type="organism ID" value="3260"/>
</dbReference>
<dbReference type="EvolutionaryTrace" id="Q58134"/>
<dbReference type="Proteomes" id="UP000000805">
    <property type="component" value="Chromosome"/>
</dbReference>
<dbReference type="GO" id="GO:0140078">
    <property type="term" value="F:class I DNA-(apurinic or apyrimidinic site) endonuclease activity"/>
    <property type="evidence" value="ECO:0007669"/>
    <property type="project" value="UniProtKB-EC"/>
</dbReference>
<dbReference type="GO" id="GO:0016799">
    <property type="term" value="F:hydrolase activity, hydrolyzing N-glycosyl compounds"/>
    <property type="evidence" value="ECO:0007669"/>
    <property type="project" value="UniProtKB-UniRule"/>
</dbReference>
<dbReference type="GO" id="GO:0006284">
    <property type="term" value="P:base-excision repair"/>
    <property type="evidence" value="ECO:0007669"/>
    <property type="project" value="UniProtKB-UniRule"/>
</dbReference>
<dbReference type="CDD" id="cd00056">
    <property type="entry name" value="ENDO3c"/>
    <property type="match status" value="1"/>
</dbReference>
<dbReference type="Gene3D" id="1.10.1670.10">
    <property type="entry name" value="Helix-hairpin-Helix base-excision DNA repair enzymes (C-terminal)"/>
    <property type="match status" value="1"/>
</dbReference>
<dbReference type="Gene3D" id="1.10.340.30">
    <property type="entry name" value="Hypothetical protein, domain 2"/>
    <property type="match status" value="1"/>
</dbReference>
<dbReference type="HAMAP" id="MF_00241">
    <property type="entry name" value="Ogg"/>
    <property type="match status" value="1"/>
</dbReference>
<dbReference type="InterPro" id="IPR012092">
    <property type="entry name" value="DNA_glyclase/AP_lyase_Ogg"/>
</dbReference>
<dbReference type="InterPro" id="IPR011257">
    <property type="entry name" value="DNA_glycosylase"/>
</dbReference>
<dbReference type="InterPro" id="IPR003265">
    <property type="entry name" value="HhH-GPD_domain"/>
</dbReference>
<dbReference type="InterPro" id="IPR023170">
    <property type="entry name" value="HhH_base_excis_C"/>
</dbReference>
<dbReference type="NCBIfam" id="NF002305">
    <property type="entry name" value="PRK01229.1"/>
    <property type="match status" value="1"/>
</dbReference>
<dbReference type="Pfam" id="PF22175">
    <property type="entry name" value="Ogg-HhH"/>
    <property type="match status" value="1"/>
</dbReference>
<dbReference type="PIRSF" id="PIRSF005954">
    <property type="entry name" value="Thrmst_ogg"/>
    <property type="match status" value="1"/>
</dbReference>
<dbReference type="SMART" id="SM00478">
    <property type="entry name" value="ENDO3c"/>
    <property type="match status" value="1"/>
</dbReference>
<dbReference type="SUPFAM" id="SSF48150">
    <property type="entry name" value="DNA-glycosylase"/>
    <property type="match status" value="1"/>
</dbReference>
<gene>
    <name evidence="1 5" type="primary">ogg</name>
    <name type="ordered locus">MJ0724</name>
</gene>
<organism>
    <name type="scientific">Methanocaldococcus jannaschii (strain ATCC 43067 / DSM 2661 / JAL-1 / JCM 10045 / NBRC 100440)</name>
    <name type="common">Methanococcus jannaschii</name>
    <dbReference type="NCBI Taxonomy" id="243232"/>
    <lineage>
        <taxon>Archaea</taxon>
        <taxon>Methanobacteriati</taxon>
        <taxon>Methanobacteriota</taxon>
        <taxon>Methanomada group</taxon>
        <taxon>Methanococci</taxon>
        <taxon>Methanococcales</taxon>
        <taxon>Methanocaldococcaceae</taxon>
        <taxon>Methanocaldococcus</taxon>
    </lineage>
</organism>
<keyword id="KW-0002">3D-structure</keyword>
<keyword id="KW-0227">DNA damage</keyword>
<keyword id="KW-0234">DNA repair</keyword>
<keyword id="KW-0326">Glycosidase</keyword>
<keyword id="KW-0378">Hydrolase</keyword>
<keyword id="KW-0456">Lyase</keyword>
<keyword id="KW-0511">Multifunctional enzyme</keyword>
<keyword id="KW-1185">Reference proteome</keyword>
<evidence type="ECO:0000255" key="1">
    <source>
        <dbReference type="HAMAP-Rule" id="MF_00241"/>
    </source>
</evidence>
<evidence type="ECO:0000269" key="2">
    <source>
    </source>
</evidence>
<evidence type="ECO:0000269" key="3">
    <source>
    </source>
</evidence>
<evidence type="ECO:0000269" key="4">
    <source>
    </source>
</evidence>
<evidence type="ECO:0000303" key="5">
    <source>
    </source>
</evidence>
<evidence type="ECO:0000305" key="6"/>
<evidence type="ECO:0000305" key="7">
    <source>
    </source>
</evidence>
<evidence type="ECO:0007744" key="8">
    <source>
        <dbReference type="PDB" id="3FHF"/>
    </source>
</evidence>
<evidence type="ECO:0007744" key="9">
    <source>
        <dbReference type="PDB" id="3KNT"/>
    </source>
</evidence>
<evidence type="ECO:0007829" key="10">
    <source>
        <dbReference type="PDB" id="3FHF"/>
    </source>
</evidence>
<reference key="1">
    <citation type="journal article" date="1996" name="Science">
        <title>Complete genome sequence of the methanogenic archaeon, Methanococcus jannaschii.</title>
        <authorList>
            <person name="Bult C.J."/>
            <person name="White O."/>
            <person name="Olsen G.J."/>
            <person name="Zhou L."/>
            <person name="Fleischmann R.D."/>
            <person name="Sutton G.G."/>
            <person name="Blake J.A."/>
            <person name="FitzGerald L.M."/>
            <person name="Clayton R.A."/>
            <person name="Gocayne J.D."/>
            <person name="Kerlavage A.R."/>
            <person name="Dougherty B.A."/>
            <person name="Tomb J.-F."/>
            <person name="Adams M.D."/>
            <person name="Reich C.I."/>
            <person name="Overbeek R."/>
            <person name="Kirkness E.F."/>
            <person name="Weinstock K.G."/>
            <person name="Merrick J.M."/>
            <person name="Glodek A."/>
            <person name="Scott J.L."/>
            <person name="Geoghagen N.S.M."/>
            <person name="Weidman J.F."/>
            <person name="Fuhrmann J.L."/>
            <person name="Nguyen D."/>
            <person name="Utterback T.R."/>
            <person name="Kelley J.M."/>
            <person name="Peterson J.D."/>
            <person name="Sadow P.W."/>
            <person name="Hanna M.C."/>
            <person name="Cotton M.D."/>
            <person name="Roberts K.M."/>
            <person name="Hurst M.A."/>
            <person name="Kaine B.P."/>
            <person name="Borodovsky M."/>
            <person name="Klenk H.-P."/>
            <person name="Fraser C.M."/>
            <person name="Smith H.O."/>
            <person name="Woese C.R."/>
            <person name="Venter J.C."/>
        </authorList>
    </citation>
    <scope>NUCLEOTIDE SEQUENCE [LARGE SCALE GENOMIC DNA]</scope>
    <source>
        <strain>ATCC 43067 / DSM 2661 / JAL-1 / JCM 10045 / NBRC 100440</strain>
    </source>
</reference>
<reference key="2">
    <citation type="journal article" date="1999" name="J. Biol. Chem.">
        <title>Characterization of an 8-oxoguanine DNA glycosylase from Methanococcus jannaschii.</title>
        <authorList>
            <person name="Gogos A."/>
            <person name="Clarke N.D."/>
        </authorList>
    </citation>
    <scope>FUNCTION</scope>
    <scope>CATALYTIC ACTIVITY</scope>
    <scope>BIOPHYSICOCHEMICAL PROPERTIES</scope>
    <scope>MUTAGENESIS OF LYS-129</scope>
</reference>
<reference evidence="8" key="3">
    <citation type="journal article" date="2009" name="Structure">
        <title>Crystal structures of two archaeal 8-oxoguanine DNA glycosylases provide structural insight into guanine/8-oxoguanine distinction.</title>
        <authorList>
            <person name="Faucher F."/>
            <person name="Duclos S."/>
            <person name="Bandaru V."/>
            <person name="Wallace S.S."/>
            <person name="Doublie S."/>
        </authorList>
    </citation>
    <scope>X-RAY CRYSTALLOGRAPHY (2.00 ANGSTROMS)</scope>
    <scope>FUNCTION</scope>
    <scope>CATALYTIC ACTIVITY</scope>
    <scope>ACTIVE SITE</scope>
    <scope>MUTAGENESIS OF 205-VAL--LYS-207</scope>
</reference>
<reference evidence="9" key="4">
    <citation type="journal article" date="2010" name="J. Mol. Biol.">
        <title>The C-terminal lysine of Ogg2 DNA glycosylases is a major molecular determinant for guanine/8-oxoguanine distinction.</title>
        <authorList>
            <person name="Faucher F."/>
            <person name="Wallace S.S."/>
            <person name="Doublie S."/>
        </authorList>
    </citation>
    <scope>X-RAY CRYSTALLOGRAPHY (2.70 ANGSTROMS) OF MUTANT GLN-129 IN COMPLEX WITH DNA CONTAINING 8-OXOGUANINE</scope>
    <scope>DOMAIN</scope>
</reference>
<accession>Q58134</accession>
<sequence>MMLIKKIEELKNSEIKDIIDKRIQEFKSFKNKSNEEWFKELCFCILTANFTAEGGIRIQKEIGDGFLTLPREELEEKLKNLGHRFYRKRAEYIVLARRFKNIKDIVESFENEKVAREFLVRNIKGIGYKEASHFLRNVGYDDVAIIDRHILRELYENNYIDEIPKTLSRRKYLEIENILRDIGEEVNLKLSELDLYIWYLRTGKVLK</sequence>
<comment type="function">
    <text evidence="2 3">Catalyzes the excision of an oxidatively damaged form of guanine (7,8-dihydro-8-oxoguanine = 8-oxoG) from DNA (PubMed:10521423, PubMed:19446526). Also cleaves the DNA backbone at apurinic/apyrimidinic sites (AP sites) (PubMed:10521423, PubMed:19446526). Has little specificity for the base opposite oxoG (PubMed:10521423).</text>
</comment>
<comment type="catalytic activity">
    <reaction evidence="1 2 3">
        <text>2'-deoxyribonucleotide-(2'-deoxyribose 5'-phosphate)-2'-deoxyribonucleotide-DNA = a 3'-end 2'-deoxyribonucleotide-(2,3-dehydro-2,3-deoxyribose 5'-phosphate)-DNA + a 5'-end 5'-phospho-2'-deoxyribonucleoside-DNA + H(+)</text>
        <dbReference type="Rhea" id="RHEA:66592"/>
        <dbReference type="Rhea" id="RHEA-COMP:13180"/>
        <dbReference type="Rhea" id="RHEA-COMP:16897"/>
        <dbReference type="Rhea" id="RHEA-COMP:17067"/>
        <dbReference type="ChEBI" id="CHEBI:15378"/>
        <dbReference type="ChEBI" id="CHEBI:136412"/>
        <dbReference type="ChEBI" id="CHEBI:157695"/>
        <dbReference type="ChEBI" id="CHEBI:167181"/>
        <dbReference type="EC" id="4.2.99.18"/>
    </reaction>
</comment>
<comment type="biophysicochemical properties">
    <phDependence>
        <text evidence="2">Optimum pH is 8.5.</text>
    </phDependence>
</comment>
<comment type="domain">
    <text evidence="4">Contains two domains separated by the central HhH motif. The C-terminal domain undergoes a conformational change upon DNA binding.</text>
</comment>
<comment type="similarity">
    <text evidence="1 6">Belongs to the type-2 OGG1 family.</text>
</comment>
<proteinExistence type="evidence at protein level"/>